<accession>O49255</accession>
<accession>Q8LD99</accession>
<feature type="chain" id="PRO_0000132311" description="NAC transcription factor 29">
    <location>
        <begin position="1"/>
        <end position="268"/>
    </location>
</feature>
<feature type="domain" description="NAC" evidence="1">
    <location>
        <begin position="9"/>
        <end position="161"/>
    </location>
</feature>
<feature type="DNA-binding region" evidence="1">
    <location>
        <begin position="106"/>
        <end position="167"/>
    </location>
</feature>
<feature type="sequence conflict" description="In Ref. 5; AAM63330." evidence="8" ref="5">
    <original>N</original>
    <variation>S</variation>
    <location>
        <position position="145"/>
    </location>
</feature>
<feature type="sequence conflict" description="In Ref. 5; AAM63330." evidence="8" ref="5">
    <original>V</original>
    <variation>I</variation>
    <location>
        <position position="188"/>
    </location>
</feature>
<feature type="sequence conflict" description="In Ref. 5; AAM63330." evidence="8" ref="5">
    <original>TE</original>
    <variation>ND</variation>
    <location>
        <begin position="195"/>
        <end position="196"/>
    </location>
</feature>
<evidence type="ECO:0000255" key="1">
    <source>
        <dbReference type="PROSITE-ProRule" id="PRU00353"/>
    </source>
</evidence>
<evidence type="ECO:0000269" key="2">
    <source>
    </source>
</evidence>
<evidence type="ECO:0000269" key="3">
    <source>
    </source>
</evidence>
<evidence type="ECO:0000269" key="4">
    <source>
    </source>
</evidence>
<evidence type="ECO:0000269" key="5">
    <source>
    </source>
</evidence>
<evidence type="ECO:0000269" key="6">
    <source>
    </source>
</evidence>
<evidence type="ECO:0000269" key="7">
    <source>
    </source>
</evidence>
<evidence type="ECO:0000305" key="8"/>
<reference key="1">
    <citation type="journal article" date="1998" name="Cell">
        <title>A homolog of NO APICAL MERISTEM is an immediate target of the floral homeotic genes APETALA3/PISTILLATA.</title>
        <authorList>
            <person name="Sablowski R.W.M."/>
            <person name="Meyerowitz E.M."/>
        </authorList>
    </citation>
    <scope>NUCLEOTIDE SEQUENCE [GENOMIC DNA]</scope>
    <scope>DEVELOPMENTAL STAGE</scope>
    <scope>INDUCTION</scope>
    <source>
        <strain>cv. Landsberg erecta</strain>
    </source>
</reference>
<reference key="2">
    <citation type="journal article" date="2000" name="Nature">
        <title>Sequence and analysis of chromosome 1 of the plant Arabidopsis thaliana.</title>
        <authorList>
            <person name="Theologis A."/>
            <person name="Ecker J.R."/>
            <person name="Palm C.J."/>
            <person name="Federspiel N.A."/>
            <person name="Kaul S."/>
            <person name="White O."/>
            <person name="Alonso J."/>
            <person name="Altafi H."/>
            <person name="Araujo R."/>
            <person name="Bowman C.L."/>
            <person name="Brooks S.Y."/>
            <person name="Buehler E."/>
            <person name="Chan A."/>
            <person name="Chao Q."/>
            <person name="Chen H."/>
            <person name="Cheuk R.F."/>
            <person name="Chin C.W."/>
            <person name="Chung M.K."/>
            <person name="Conn L."/>
            <person name="Conway A.B."/>
            <person name="Conway A.R."/>
            <person name="Creasy T.H."/>
            <person name="Dewar K."/>
            <person name="Dunn P."/>
            <person name="Etgu P."/>
            <person name="Feldblyum T.V."/>
            <person name="Feng J.-D."/>
            <person name="Fong B."/>
            <person name="Fujii C.Y."/>
            <person name="Gill J.E."/>
            <person name="Goldsmith A.D."/>
            <person name="Haas B."/>
            <person name="Hansen N.F."/>
            <person name="Hughes B."/>
            <person name="Huizar L."/>
            <person name="Hunter J.L."/>
            <person name="Jenkins J."/>
            <person name="Johnson-Hopson C."/>
            <person name="Khan S."/>
            <person name="Khaykin E."/>
            <person name="Kim C.J."/>
            <person name="Koo H.L."/>
            <person name="Kremenetskaia I."/>
            <person name="Kurtz D.B."/>
            <person name="Kwan A."/>
            <person name="Lam B."/>
            <person name="Langin-Hooper S."/>
            <person name="Lee A."/>
            <person name="Lee J.M."/>
            <person name="Lenz C.A."/>
            <person name="Li J.H."/>
            <person name="Li Y.-P."/>
            <person name="Lin X."/>
            <person name="Liu S.X."/>
            <person name="Liu Z.A."/>
            <person name="Luros J.S."/>
            <person name="Maiti R."/>
            <person name="Marziali A."/>
            <person name="Militscher J."/>
            <person name="Miranda M."/>
            <person name="Nguyen M."/>
            <person name="Nierman W.C."/>
            <person name="Osborne B.I."/>
            <person name="Pai G."/>
            <person name="Peterson J."/>
            <person name="Pham P.K."/>
            <person name="Rizzo M."/>
            <person name="Rooney T."/>
            <person name="Rowley D."/>
            <person name="Sakano H."/>
            <person name="Salzberg S.L."/>
            <person name="Schwartz J.R."/>
            <person name="Shinn P."/>
            <person name="Southwick A.M."/>
            <person name="Sun H."/>
            <person name="Tallon L.J."/>
            <person name="Tambunga G."/>
            <person name="Toriumi M.J."/>
            <person name="Town C.D."/>
            <person name="Utterback T."/>
            <person name="Van Aken S."/>
            <person name="Vaysberg M."/>
            <person name="Vysotskaia V.S."/>
            <person name="Walker M."/>
            <person name="Wu D."/>
            <person name="Yu G."/>
            <person name="Fraser C.M."/>
            <person name="Venter J.C."/>
            <person name="Davis R.W."/>
        </authorList>
    </citation>
    <scope>NUCLEOTIDE SEQUENCE [LARGE SCALE GENOMIC DNA]</scope>
    <source>
        <strain>cv. Columbia</strain>
    </source>
</reference>
<reference key="3">
    <citation type="journal article" date="2017" name="Plant J.">
        <title>Araport11: a complete reannotation of the Arabidopsis thaliana reference genome.</title>
        <authorList>
            <person name="Cheng C.Y."/>
            <person name="Krishnakumar V."/>
            <person name="Chan A.P."/>
            <person name="Thibaud-Nissen F."/>
            <person name="Schobel S."/>
            <person name="Town C.D."/>
        </authorList>
    </citation>
    <scope>GENOME REANNOTATION</scope>
    <source>
        <strain>cv. Columbia</strain>
    </source>
</reference>
<reference key="4">
    <citation type="journal article" date="2003" name="Science">
        <title>Empirical analysis of transcriptional activity in the Arabidopsis genome.</title>
        <authorList>
            <person name="Yamada K."/>
            <person name="Lim J."/>
            <person name="Dale J.M."/>
            <person name="Chen H."/>
            <person name="Shinn P."/>
            <person name="Palm C.J."/>
            <person name="Southwick A.M."/>
            <person name="Wu H.C."/>
            <person name="Kim C.J."/>
            <person name="Nguyen M."/>
            <person name="Pham P.K."/>
            <person name="Cheuk R.F."/>
            <person name="Karlin-Newmann G."/>
            <person name="Liu S.X."/>
            <person name="Lam B."/>
            <person name="Sakano H."/>
            <person name="Wu T."/>
            <person name="Yu G."/>
            <person name="Miranda M."/>
            <person name="Quach H.L."/>
            <person name="Tripp M."/>
            <person name="Chang C.H."/>
            <person name="Lee J.M."/>
            <person name="Toriumi M.J."/>
            <person name="Chan M.M."/>
            <person name="Tang C.C."/>
            <person name="Onodera C.S."/>
            <person name="Deng J.M."/>
            <person name="Akiyama K."/>
            <person name="Ansari Y."/>
            <person name="Arakawa T."/>
            <person name="Banh J."/>
            <person name="Banno F."/>
            <person name="Bowser L."/>
            <person name="Brooks S.Y."/>
            <person name="Carninci P."/>
            <person name="Chao Q."/>
            <person name="Choy N."/>
            <person name="Enju A."/>
            <person name="Goldsmith A.D."/>
            <person name="Gurjal M."/>
            <person name="Hansen N.F."/>
            <person name="Hayashizaki Y."/>
            <person name="Johnson-Hopson C."/>
            <person name="Hsuan V.W."/>
            <person name="Iida K."/>
            <person name="Karnes M."/>
            <person name="Khan S."/>
            <person name="Koesema E."/>
            <person name="Ishida J."/>
            <person name="Jiang P.X."/>
            <person name="Jones T."/>
            <person name="Kawai J."/>
            <person name="Kamiya A."/>
            <person name="Meyers C."/>
            <person name="Nakajima M."/>
            <person name="Narusaka M."/>
            <person name="Seki M."/>
            <person name="Sakurai T."/>
            <person name="Satou M."/>
            <person name="Tamse R."/>
            <person name="Vaysberg M."/>
            <person name="Wallender E.K."/>
            <person name="Wong C."/>
            <person name="Yamamura Y."/>
            <person name="Yuan S."/>
            <person name="Shinozaki K."/>
            <person name="Davis R.W."/>
            <person name="Theologis A."/>
            <person name="Ecker J.R."/>
        </authorList>
    </citation>
    <scope>NUCLEOTIDE SEQUENCE [LARGE SCALE MRNA]</scope>
    <source>
        <strain>cv. Columbia</strain>
    </source>
</reference>
<reference key="5">
    <citation type="submission" date="2002-03" db="EMBL/GenBank/DDBJ databases">
        <title>Full-length cDNA from Arabidopsis thaliana.</title>
        <authorList>
            <person name="Brover V.V."/>
            <person name="Troukhan M.E."/>
            <person name="Alexandrov N.A."/>
            <person name="Lu Y.-P."/>
            <person name="Flavell R.B."/>
            <person name="Feldmann K.A."/>
        </authorList>
    </citation>
    <scope>NUCLEOTIDE SEQUENCE [LARGE SCALE MRNA]</scope>
</reference>
<reference key="6">
    <citation type="journal article" date="2003" name="DNA Res.">
        <title>Comprehensive analysis of NAC family genes in Oryza sativa and Arabidopsis thaliana.</title>
        <authorList>
            <person name="Ooka H."/>
            <person name="Satoh K."/>
            <person name="Doi K."/>
            <person name="Nagata T."/>
            <person name="Otomo Y."/>
            <person name="Murakami K."/>
            <person name="Matsubara K."/>
            <person name="Osato N."/>
            <person name="Kawai J."/>
            <person name="Carninci P."/>
            <person name="Hayashizaki Y."/>
            <person name="Suzuki K."/>
            <person name="Kojima K."/>
            <person name="Takahara Y."/>
            <person name="Yamamoto K."/>
            <person name="Kikuchi S."/>
        </authorList>
    </citation>
    <scope>GENE FAMILY</scope>
    <scope>NOMENCLATURE</scope>
</reference>
<reference key="7">
    <citation type="journal article" date="2006" name="Plant J.">
        <title>AtNAP, a NAC family transcription factor, has an important role in leaf senescence.</title>
        <authorList>
            <person name="Guo Y."/>
            <person name="Gan S."/>
        </authorList>
    </citation>
    <scope>FUNCTION</scope>
    <scope>TISSUE SPECIFICITY</scope>
    <scope>DEVELOPMENTAL STAGE</scope>
    <scope>SUBCELLULAR LOCATION</scope>
    <scope>DISRUPTION PHENOTYPE</scope>
    <source>
        <strain>cv. Columbia</strain>
    </source>
</reference>
<reference key="8">
    <citation type="journal article" date="2008" name="Plant Cell">
        <title>NAC family proteins NARS1/NAC2 and NARS2/NAM in the outer integument regulate embryogenesis in Arabidopsis.</title>
        <authorList>
            <person name="Kunieda T."/>
            <person name="Mitsuda N."/>
            <person name="Ohme-Takagi M."/>
            <person name="Takeda S."/>
            <person name="Aida M."/>
            <person name="Tasaka M."/>
            <person name="Kondo M."/>
            <person name="Nishimura M."/>
            <person name="Hara-Nishimura I."/>
        </authorList>
    </citation>
    <scope>FUNCTION</scope>
</reference>
<reference key="9">
    <citation type="journal article" date="2012" name="Plant Physiol.">
        <title>An abscisic acid-AtNAP transcription factor-SAG113 protein phosphatase 2C regulatory chain for controlling dehydration in senescing Arabidopsis leaves.</title>
        <authorList>
            <person name="Zhang K."/>
            <person name="Gan S.S."/>
        </authorList>
    </citation>
    <scope>FUNCTION</scope>
    <scope>INDUCTION</scope>
    <scope>DISRUPTION PHENOTYPE</scope>
</reference>
<reference key="10">
    <citation type="journal article" date="2014" name="J. Exp. Bot.">
        <title>Gene regulatory cascade of senescence-associated NAC transcription factors activated by ETHYLENE-INSENSITIVE2-mediated leaf senescence signalling in Arabidopsis.</title>
        <authorList>
            <person name="Kim H.J."/>
            <person name="Hong S.H."/>
            <person name="Kim Y.W."/>
            <person name="Lee I.H."/>
            <person name="Jun J.H."/>
            <person name="Phee B.K."/>
            <person name="Rupak T."/>
            <person name="Jeong H."/>
            <person name="Lee Y."/>
            <person name="Hong B.S."/>
            <person name="Nam H.G."/>
            <person name="Woo H.R."/>
            <person name="Lim P.O."/>
        </authorList>
    </citation>
    <scope>INDUCTION BY SENESCENCE</scope>
</reference>
<reference key="11">
    <citation type="journal article" date="2014" name="Plant Cell">
        <title>A NAP-AAO3 regulatory module promotes chlorophyll degradation via ABA biosynthesis in Arabidopsis leaves.</title>
        <authorList>
            <person name="Yang J."/>
            <person name="Worley E."/>
            <person name="Udvardi M."/>
        </authorList>
    </citation>
    <scope>FUNCTION</scope>
    <scope>INDUCTION</scope>
    <scope>DISRUPTION PHENOTYPE</scope>
</reference>
<sequence length="268" mass="31426">MEVTSQSTLPPGFRFHPTDEELIVYYLRNQTMSKPCPVSIIPEVDIYKFDPWQLPEKTEFGENEWYFFSPRERKYPNGVRPNRAAVSGYWKATGTDKAIHSGSSNVGVKKALVFYKGRPPKGIKTDWIMHEYRLHDSRKASTKRNGSMRLDEWVLCRIYKKRGASKLLNEQEGFMDEVLMEDETKVVVNEAERRTEEEIMMMTSMKLPRTCSLAHLLEMDYMGPVSHIDNFSQFDHLHQPDSESSWFGDLQFNQDEILNHHRQAMFKF</sequence>
<keyword id="KW-0010">Activator</keyword>
<keyword id="KW-0238">DNA-binding</keyword>
<keyword id="KW-0539">Nucleus</keyword>
<keyword id="KW-1185">Reference proteome</keyword>
<keyword id="KW-0804">Transcription</keyword>
<keyword id="KW-0805">Transcription regulation</keyword>
<proteinExistence type="evidence at transcript level"/>
<name>NAC29_ARATH</name>
<gene>
    <name type="primary">NAC029</name>
    <name type="synonym">ANAC029</name>
    <name type="synonym">NAC29</name>
    <name type="synonym">NAP</name>
    <name type="ordered locus">At1g69490</name>
    <name type="ORF">F10D13.14</name>
</gene>
<organism>
    <name type="scientific">Arabidopsis thaliana</name>
    <name type="common">Mouse-ear cress</name>
    <dbReference type="NCBI Taxonomy" id="3702"/>
    <lineage>
        <taxon>Eukaryota</taxon>
        <taxon>Viridiplantae</taxon>
        <taxon>Streptophyta</taxon>
        <taxon>Embryophyta</taxon>
        <taxon>Tracheophyta</taxon>
        <taxon>Spermatophyta</taxon>
        <taxon>Magnoliopsida</taxon>
        <taxon>eudicotyledons</taxon>
        <taxon>Gunneridae</taxon>
        <taxon>Pentapetalae</taxon>
        <taxon>rosids</taxon>
        <taxon>malvids</taxon>
        <taxon>Brassicales</taxon>
        <taxon>Brassicaceae</taxon>
        <taxon>Camelineae</taxon>
        <taxon>Arabidopsis</taxon>
    </lineage>
</organism>
<dbReference type="EMBL" id="AJ222713">
    <property type="protein sequence ID" value="CAA10955.1"/>
    <property type="molecule type" value="Genomic_DNA"/>
</dbReference>
<dbReference type="EMBL" id="AY051015">
    <property type="protein sequence ID" value="AAK93692.1"/>
    <property type="molecule type" value="mRNA"/>
</dbReference>
<dbReference type="EMBL" id="AC073178">
    <property type="protein sequence ID" value="AAG60108.1"/>
    <property type="molecule type" value="Genomic_DNA"/>
</dbReference>
<dbReference type="EMBL" id="CP002684">
    <property type="protein sequence ID" value="AEE34932.1"/>
    <property type="molecule type" value="Genomic_DNA"/>
</dbReference>
<dbReference type="EMBL" id="AF360201">
    <property type="protein sequence ID" value="AAK25911.1"/>
    <property type="molecule type" value="mRNA"/>
</dbReference>
<dbReference type="EMBL" id="AY086124">
    <property type="protein sequence ID" value="AAM63330.1"/>
    <property type="molecule type" value="mRNA"/>
</dbReference>
<dbReference type="PIR" id="T52343">
    <property type="entry name" value="T52343"/>
</dbReference>
<dbReference type="RefSeq" id="NP_564966.1">
    <property type="nucleotide sequence ID" value="NM_105616.4"/>
</dbReference>
<dbReference type="SMR" id="O49255"/>
<dbReference type="BioGRID" id="28503">
    <property type="interactions" value="6"/>
</dbReference>
<dbReference type="FunCoup" id="O49255">
    <property type="interactions" value="19"/>
</dbReference>
<dbReference type="IntAct" id="O49255">
    <property type="interactions" value="2"/>
</dbReference>
<dbReference type="STRING" id="3702.O49255"/>
<dbReference type="iPTMnet" id="O49255"/>
<dbReference type="PaxDb" id="3702-AT1G69490.1"/>
<dbReference type="ProteomicsDB" id="251034"/>
<dbReference type="EnsemblPlants" id="AT1G69490.1">
    <property type="protein sequence ID" value="AT1G69490.1"/>
    <property type="gene ID" value="AT1G69490"/>
</dbReference>
<dbReference type="GeneID" id="843282"/>
<dbReference type="Gramene" id="AT1G69490.1">
    <property type="protein sequence ID" value="AT1G69490.1"/>
    <property type="gene ID" value="AT1G69490"/>
</dbReference>
<dbReference type="KEGG" id="ath:AT1G69490"/>
<dbReference type="Araport" id="AT1G69490"/>
<dbReference type="TAIR" id="AT1G69490">
    <property type="gene designation" value="NAP"/>
</dbReference>
<dbReference type="eggNOG" id="ENOG502QSIY">
    <property type="taxonomic scope" value="Eukaryota"/>
</dbReference>
<dbReference type="HOGENOM" id="CLU_035664_8_2_1"/>
<dbReference type="InParanoid" id="O49255"/>
<dbReference type="OMA" id="NAGHAQM"/>
<dbReference type="OrthoDB" id="1921961at2759"/>
<dbReference type="PhylomeDB" id="O49255"/>
<dbReference type="PRO" id="PR:O49255"/>
<dbReference type="Proteomes" id="UP000006548">
    <property type="component" value="Chromosome 1"/>
</dbReference>
<dbReference type="ExpressionAtlas" id="O49255">
    <property type="expression patterns" value="baseline and differential"/>
</dbReference>
<dbReference type="GO" id="GO:0005634">
    <property type="term" value="C:nucleus"/>
    <property type="evidence" value="ECO:0000314"/>
    <property type="project" value="TAIR"/>
</dbReference>
<dbReference type="GO" id="GO:0003700">
    <property type="term" value="F:DNA-binding transcription factor activity"/>
    <property type="evidence" value="ECO:0000250"/>
    <property type="project" value="TAIR"/>
</dbReference>
<dbReference type="GO" id="GO:0000976">
    <property type="term" value="F:transcription cis-regulatory region binding"/>
    <property type="evidence" value="ECO:0000353"/>
    <property type="project" value="TAIR"/>
</dbReference>
<dbReference type="GO" id="GO:0009793">
    <property type="term" value="P:embryo development ending in seed dormancy"/>
    <property type="evidence" value="ECO:0000315"/>
    <property type="project" value="UniProtKB"/>
</dbReference>
<dbReference type="GO" id="GO:0009908">
    <property type="term" value="P:flower development"/>
    <property type="evidence" value="ECO:0000315"/>
    <property type="project" value="TAIR"/>
</dbReference>
<dbReference type="GO" id="GO:0009835">
    <property type="term" value="P:fruit ripening"/>
    <property type="evidence" value="ECO:0000315"/>
    <property type="project" value="CACAO"/>
</dbReference>
<dbReference type="GO" id="GO:0010150">
    <property type="term" value="P:leaf senescence"/>
    <property type="evidence" value="ECO:0000315"/>
    <property type="project" value="TAIR"/>
</dbReference>
<dbReference type="GO" id="GO:0009825">
    <property type="term" value="P:multidimensional cell growth"/>
    <property type="evidence" value="ECO:0000315"/>
    <property type="project" value="TAIR"/>
</dbReference>
<dbReference type="FunFam" id="2.170.150.80:FF:000004">
    <property type="entry name" value="NAC transcription factor"/>
    <property type="match status" value="1"/>
</dbReference>
<dbReference type="Gene3D" id="2.170.150.80">
    <property type="entry name" value="NAC domain"/>
    <property type="match status" value="1"/>
</dbReference>
<dbReference type="InterPro" id="IPR003441">
    <property type="entry name" value="NAC-dom"/>
</dbReference>
<dbReference type="InterPro" id="IPR036093">
    <property type="entry name" value="NAC_dom_sf"/>
</dbReference>
<dbReference type="PANTHER" id="PTHR31744:SF233">
    <property type="entry name" value="NAC DOMAIN-CONTAINING PROTEIN 72-LIKE"/>
    <property type="match status" value="1"/>
</dbReference>
<dbReference type="PANTHER" id="PTHR31744">
    <property type="entry name" value="PROTEIN CUP-SHAPED COTYLEDON 2-RELATED"/>
    <property type="match status" value="1"/>
</dbReference>
<dbReference type="Pfam" id="PF02365">
    <property type="entry name" value="NAM"/>
    <property type="match status" value="1"/>
</dbReference>
<dbReference type="SUPFAM" id="SSF101941">
    <property type="entry name" value="NAC domain"/>
    <property type="match status" value="1"/>
</dbReference>
<dbReference type="PROSITE" id="PS51005">
    <property type="entry name" value="NAC"/>
    <property type="match status" value="1"/>
</dbReference>
<comment type="function">
    <text evidence="2 3 4 6">Transcription activator that binds to, and transactivates the promoter of the abscisic aldehyde oxidase AAO3. Promotes chlorophyll degradation in leaves by enhancing transcription of AAO3, which leads to increased levels of the senescence-inducing hormone abscisic acid (ABA) (PubMed:25516602). Involved in the control of dehydration in senescing leaves. Binds to the DNA sequence 5'-CACGTAAGT-3' of SAG113 promoter. SAG113 acts as a negative regulator of ABA signaling for stomatal closure in leaves, and controls water loss during leaf senescence (PubMed:22184656). Transcription factor of the NAC family involved in senescence. May function in the transition between active cell division and cell expansion (PubMed:16640597). Required for normal seed development and morphology (PubMed:18849494).</text>
</comment>
<comment type="subcellular location">
    <subcellularLocation>
        <location evidence="1 2">Nucleus</location>
    </subcellularLocation>
</comment>
<comment type="tissue specificity">
    <text evidence="2">Expressed in senescing leaves, petals and sepals.</text>
</comment>
<comment type="developmental stage">
    <text evidence="2 7">Expressed at the base of the inflorescence meristem and at late stages of development in petals and stamens. Up-regulated during leaf senescence.</text>
</comment>
<comment type="induction">
    <text evidence="4 5 6 7">Induced by the heterodimer APETALA3 (AP3)/PISTILLATA (PI) (PubMed:9489703). Induced by senescence (PubMed:22184656, PubMed:24659488, PubMed:25516602). Induced by abscisic acid (ABA) (PubMed:22184656, PubMed:25516602). Induced by ethylene (PubMed:25516602).</text>
</comment>
<comment type="domain">
    <text evidence="1">The NAC domain includes a DNA-binding domain and a dimerization domain.</text>
</comment>
<comment type="disruption phenotype">
    <text evidence="2 4">No visible phenotype, but delayed leaf senescence (PubMed:16640597, PubMed:22184656). No visible phenotype under normal growth conditions, but mutant leaves show a stay-green phenotype and deficiency in chlorophyll degradation during extended darkness.</text>
</comment>
<comment type="miscellaneous">
    <text evidence="3">Plants silencing NAC029 produce abnormally shaped seeds.</text>
</comment>
<protein>
    <recommendedName>
        <fullName>NAC transcription factor 29</fullName>
        <shortName>AtNAC029</shortName>
    </recommendedName>
    <alternativeName>
        <fullName>Protein NAC-LIKE, ACTIVATED BY AP3/PI</fullName>
        <shortName>AtNAP</shortName>
    </alternativeName>
</protein>